<feature type="chain" id="PRO_0000266429" description="Guanylate kinase">
    <location>
        <begin position="1"/>
        <end position="209"/>
    </location>
</feature>
<feature type="domain" description="Guanylate kinase-like" evidence="1">
    <location>
        <begin position="8"/>
        <end position="186"/>
    </location>
</feature>
<feature type="binding site" evidence="1">
    <location>
        <begin position="15"/>
        <end position="22"/>
    </location>
    <ligand>
        <name>ATP</name>
        <dbReference type="ChEBI" id="CHEBI:30616"/>
    </ligand>
</feature>
<sequence>MTPPASPGVLYIVSAPSGAGKTSLVKALLKSDPAIRLSVSHTTRAPRPGESDGRDYHFVARDTFEKMLADGEFLEHAEVYGNFYGTSRGRIGQELDAGRDLLLEIDWQGAEQVKRHFPQSTSIFILPPTFSALRTRLTGRGQDSPEIIERRLAAAAHDVAHAEAFDYIIVNDDFDHALQDLVAITRSIRLEAQRQLKRHAALFGEFRRI</sequence>
<name>KGUA_THIDA</name>
<gene>
    <name evidence="1" type="primary">gmk</name>
    <name type="ordered locus">Tbd_0473</name>
</gene>
<keyword id="KW-0067">ATP-binding</keyword>
<keyword id="KW-0963">Cytoplasm</keyword>
<keyword id="KW-0418">Kinase</keyword>
<keyword id="KW-0547">Nucleotide-binding</keyword>
<keyword id="KW-1185">Reference proteome</keyword>
<keyword id="KW-0808">Transferase</keyword>
<organism>
    <name type="scientific">Thiobacillus denitrificans (strain ATCC 25259 / T1)</name>
    <dbReference type="NCBI Taxonomy" id="292415"/>
    <lineage>
        <taxon>Bacteria</taxon>
        <taxon>Pseudomonadati</taxon>
        <taxon>Pseudomonadota</taxon>
        <taxon>Betaproteobacteria</taxon>
        <taxon>Nitrosomonadales</taxon>
        <taxon>Thiobacillaceae</taxon>
        <taxon>Thiobacillus</taxon>
    </lineage>
</organism>
<evidence type="ECO:0000255" key="1">
    <source>
        <dbReference type="HAMAP-Rule" id="MF_00328"/>
    </source>
</evidence>
<accession>Q3SLI4</accession>
<comment type="function">
    <text evidence="1">Essential for recycling GMP and indirectly, cGMP.</text>
</comment>
<comment type="catalytic activity">
    <reaction evidence="1">
        <text>GMP + ATP = GDP + ADP</text>
        <dbReference type="Rhea" id="RHEA:20780"/>
        <dbReference type="ChEBI" id="CHEBI:30616"/>
        <dbReference type="ChEBI" id="CHEBI:58115"/>
        <dbReference type="ChEBI" id="CHEBI:58189"/>
        <dbReference type="ChEBI" id="CHEBI:456216"/>
        <dbReference type="EC" id="2.7.4.8"/>
    </reaction>
</comment>
<comment type="subcellular location">
    <subcellularLocation>
        <location evidence="1">Cytoplasm</location>
    </subcellularLocation>
</comment>
<comment type="similarity">
    <text evidence="1">Belongs to the guanylate kinase family.</text>
</comment>
<reference key="1">
    <citation type="journal article" date="2006" name="J. Bacteriol.">
        <title>The genome sequence of the obligately chemolithoautotrophic, facultatively anaerobic bacterium Thiobacillus denitrificans.</title>
        <authorList>
            <person name="Beller H.R."/>
            <person name="Chain P.S."/>
            <person name="Letain T.E."/>
            <person name="Chakicherla A."/>
            <person name="Larimer F.W."/>
            <person name="Richardson P.M."/>
            <person name="Coleman M.A."/>
            <person name="Wood A.P."/>
            <person name="Kelly D.P."/>
        </authorList>
    </citation>
    <scope>NUCLEOTIDE SEQUENCE [LARGE SCALE GENOMIC DNA]</scope>
    <source>
        <strain>ATCC 25259 / T1</strain>
    </source>
</reference>
<dbReference type="EC" id="2.7.4.8" evidence="1"/>
<dbReference type="EMBL" id="CP000116">
    <property type="protein sequence ID" value="AAZ96426.1"/>
    <property type="molecule type" value="Genomic_DNA"/>
</dbReference>
<dbReference type="RefSeq" id="WP_011310985.1">
    <property type="nucleotide sequence ID" value="NC_007404.1"/>
</dbReference>
<dbReference type="SMR" id="Q3SLI4"/>
<dbReference type="STRING" id="292415.Tbd_0473"/>
<dbReference type="KEGG" id="tbd:Tbd_0473"/>
<dbReference type="eggNOG" id="COG0194">
    <property type="taxonomic scope" value="Bacteria"/>
</dbReference>
<dbReference type="HOGENOM" id="CLU_001715_1_0_4"/>
<dbReference type="OrthoDB" id="9808150at2"/>
<dbReference type="Proteomes" id="UP000008291">
    <property type="component" value="Chromosome"/>
</dbReference>
<dbReference type="GO" id="GO:0005829">
    <property type="term" value="C:cytosol"/>
    <property type="evidence" value="ECO:0007669"/>
    <property type="project" value="TreeGrafter"/>
</dbReference>
<dbReference type="GO" id="GO:0005524">
    <property type="term" value="F:ATP binding"/>
    <property type="evidence" value="ECO:0007669"/>
    <property type="project" value="UniProtKB-UniRule"/>
</dbReference>
<dbReference type="GO" id="GO:0004385">
    <property type="term" value="F:guanylate kinase activity"/>
    <property type="evidence" value="ECO:0007669"/>
    <property type="project" value="UniProtKB-UniRule"/>
</dbReference>
<dbReference type="CDD" id="cd00071">
    <property type="entry name" value="GMPK"/>
    <property type="match status" value="1"/>
</dbReference>
<dbReference type="FunFam" id="3.30.63.10:FF:000002">
    <property type="entry name" value="Guanylate kinase 1"/>
    <property type="match status" value="1"/>
</dbReference>
<dbReference type="Gene3D" id="3.30.63.10">
    <property type="entry name" value="Guanylate Kinase phosphate binding domain"/>
    <property type="match status" value="1"/>
</dbReference>
<dbReference type="Gene3D" id="3.40.50.300">
    <property type="entry name" value="P-loop containing nucleotide triphosphate hydrolases"/>
    <property type="match status" value="2"/>
</dbReference>
<dbReference type="HAMAP" id="MF_00328">
    <property type="entry name" value="Guanylate_kinase"/>
    <property type="match status" value="1"/>
</dbReference>
<dbReference type="InterPro" id="IPR008145">
    <property type="entry name" value="GK/Ca_channel_bsu"/>
</dbReference>
<dbReference type="InterPro" id="IPR008144">
    <property type="entry name" value="Guanylate_kin-like_dom"/>
</dbReference>
<dbReference type="InterPro" id="IPR017665">
    <property type="entry name" value="Guanylate_kinase"/>
</dbReference>
<dbReference type="InterPro" id="IPR020590">
    <property type="entry name" value="Guanylate_kinase_CS"/>
</dbReference>
<dbReference type="InterPro" id="IPR027417">
    <property type="entry name" value="P-loop_NTPase"/>
</dbReference>
<dbReference type="NCBIfam" id="TIGR03263">
    <property type="entry name" value="guanyl_kin"/>
    <property type="match status" value="1"/>
</dbReference>
<dbReference type="PANTHER" id="PTHR23117:SF13">
    <property type="entry name" value="GUANYLATE KINASE"/>
    <property type="match status" value="1"/>
</dbReference>
<dbReference type="PANTHER" id="PTHR23117">
    <property type="entry name" value="GUANYLATE KINASE-RELATED"/>
    <property type="match status" value="1"/>
</dbReference>
<dbReference type="Pfam" id="PF00625">
    <property type="entry name" value="Guanylate_kin"/>
    <property type="match status" value="1"/>
</dbReference>
<dbReference type="SMART" id="SM00072">
    <property type="entry name" value="GuKc"/>
    <property type="match status" value="1"/>
</dbReference>
<dbReference type="SUPFAM" id="SSF52540">
    <property type="entry name" value="P-loop containing nucleoside triphosphate hydrolases"/>
    <property type="match status" value="1"/>
</dbReference>
<dbReference type="PROSITE" id="PS00856">
    <property type="entry name" value="GUANYLATE_KINASE_1"/>
    <property type="match status" value="1"/>
</dbReference>
<dbReference type="PROSITE" id="PS50052">
    <property type="entry name" value="GUANYLATE_KINASE_2"/>
    <property type="match status" value="1"/>
</dbReference>
<proteinExistence type="inferred from homology"/>
<protein>
    <recommendedName>
        <fullName evidence="1">Guanylate kinase</fullName>
        <ecNumber evidence="1">2.7.4.8</ecNumber>
    </recommendedName>
    <alternativeName>
        <fullName evidence="1">GMP kinase</fullName>
    </alternativeName>
</protein>